<organism>
    <name type="scientific">Photobacterium profundum (strain SS9)</name>
    <dbReference type="NCBI Taxonomy" id="298386"/>
    <lineage>
        <taxon>Bacteria</taxon>
        <taxon>Pseudomonadati</taxon>
        <taxon>Pseudomonadota</taxon>
        <taxon>Gammaproteobacteria</taxon>
        <taxon>Vibrionales</taxon>
        <taxon>Vibrionaceae</taxon>
        <taxon>Photobacterium</taxon>
    </lineage>
</organism>
<evidence type="ECO:0000255" key="1">
    <source>
        <dbReference type="HAMAP-Rule" id="MF_00384"/>
    </source>
</evidence>
<dbReference type="EC" id="2.7.1.39" evidence="1"/>
<dbReference type="EMBL" id="CR378664">
    <property type="protein sequence ID" value="CAG18976.1"/>
    <property type="molecule type" value="Genomic_DNA"/>
</dbReference>
<dbReference type="RefSeq" id="WP_011217327.1">
    <property type="nucleotide sequence ID" value="NC_006370.1"/>
</dbReference>
<dbReference type="SMR" id="Q6LUP9"/>
<dbReference type="STRING" id="298386.PBPRA0553"/>
<dbReference type="KEGG" id="ppr:PBPRA0553"/>
<dbReference type="eggNOG" id="COG0083">
    <property type="taxonomic scope" value="Bacteria"/>
</dbReference>
<dbReference type="HOGENOM" id="CLU_041243_1_1_6"/>
<dbReference type="UniPathway" id="UPA00050">
    <property type="reaction ID" value="UER00064"/>
</dbReference>
<dbReference type="Proteomes" id="UP000000593">
    <property type="component" value="Chromosome 1"/>
</dbReference>
<dbReference type="GO" id="GO:0005737">
    <property type="term" value="C:cytoplasm"/>
    <property type="evidence" value="ECO:0007669"/>
    <property type="project" value="UniProtKB-SubCell"/>
</dbReference>
<dbReference type="GO" id="GO:0005524">
    <property type="term" value="F:ATP binding"/>
    <property type="evidence" value="ECO:0007669"/>
    <property type="project" value="UniProtKB-UniRule"/>
</dbReference>
<dbReference type="GO" id="GO:0004413">
    <property type="term" value="F:homoserine kinase activity"/>
    <property type="evidence" value="ECO:0007669"/>
    <property type="project" value="UniProtKB-UniRule"/>
</dbReference>
<dbReference type="GO" id="GO:0009088">
    <property type="term" value="P:threonine biosynthetic process"/>
    <property type="evidence" value="ECO:0007669"/>
    <property type="project" value="UniProtKB-UniRule"/>
</dbReference>
<dbReference type="Gene3D" id="3.30.230.10">
    <property type="match status" value="1"/>
</dbReference>
<dbReference type="Gene3D" id="3.30.70.890">
    <property type="entry name" value="GHMP kinase, C-terminal domain"/>
    <property type="match status" value="1"/>
</dbReference>
<dbReference type="HAMAP" id="MF_00384">
    <property type="entry name" value="Homoser_kinase"/>
    <property type="match status" value="1"/>
</dbReference>
<dbReference type="InterPro" id="IPR013750">
    <property type="entry name" value="GHMP_kinase_C_dom"/>
</dbReference>
<dbReference type="InterPro" id="IPR036554">
    <property type="entry name" value="GHMP_kinase_C_sf"/>
</dbReference>
<dbReference type="InterPro" id="IPR006204">
    <property type="entry name" value="GHMP_kinase_N_dom"/>
</dbReference>
<dbReference type="InterPro" id="IPR006203">
    <property type="entry name" value="GHMP_knse_ATP-bd_CS"/>
</dbReference>
<dbReference type="InterPro" id="IPR000870">
    <property type="entry name" value="Homoserine_kinase"/>
</dbReference>
<dbReference type="InterPro" id="IPR020568">
    <property type="entry name" value="Ribosomal_Su5_D2-typ_SF"/>
</dbReference>
<dbReference type="InterPro" id="IPR014721">
    <property type="entry name" value="Ribsml_uS5_D2-typ_fold_subgr"/>
</dbReference>
<dbReference type="NCBIfam" id="NF002288">
    <property type="entry name" value="PRK01212.1-4"/>
    <property type="match status" value="1"/>
</dbReference>
<dbReference type="NCBIfam" id="TIGR00191">
    <property type="entry name" value="thrB"/>
    <property type="match status" value="1"/>
</dbReference>
<dbReference type="PANTHER" id="PTHR20861:SF1">
    <property type="entry name" value="HOMOSERINE KINASE"/>
    <property type="match status" value="1"/>
</dbReference>
<dbReference type="PANTHER" id="PTHR20861">
    <property type="entry name" value="HOMOSERINE/4-DIPHOSPHOCYTIDYL-2-C-METHYL-D-ERYTHRITOL KINASE"/>
    <property type="match status" value="1"/>
</dbReference>
<dbReference type="Pfam" id="PF08544">
    <property type="entry name" value="GHMP_kinases_C"/>
    <property type="match status" value="1"/>
</dbReference>
<dbReference type="Pfam" id="PF00288">
    <property type="entry name" value="GHMP_kinases_N"/>
    <property type="match status" value="1"/>
</dbReference>
<dbReference type="PIRSF" id="PIRSF000676">
    <property type="entry name" value="Homoser_kin"/>
    <property type="match status" value="1"/>
</dbReference>
<dbReference type="PRINTS" id="PR00958">
    <property type="entry name" value="HOMSERKINASE"/>
</dbReference>
<dbReference type="SUPFAM" id="SSF55060">
    <property type="entry name" value="GHMP Kinase, C-terminal domain"/>
    <property type="match status" value="1"/>
</dbReference>
<dbReference type="SUPFAM" id="SSF54211">
    <property type="entry name" value="Ribosomal protein S5 domain 2-like"/>
    <property type="match status" value="1"/>
</dbReference>
<dbReference type="PROSITE" id="PS00627">
    <property type="entry name" value="GHMP_KINASES_ATP"/>
    <property type="match status" value="1"/>
</dbReference>
<keyword id="KW-0028">Amino-acid biosynthesis</keyword>
<keyword id="KW-0067">ATP-binding</keyword>
<keyword id="KW-0963">Cytoplasm</keyword>
<keyword id="KW-0418">Kinase</keyword>
<keyword id="KW-0547">Nucleotide-binding</keyword>
<keyword id="KW-1185">Reference proteome</keyword>
<keyword id="KW-0791">Threonine biosynthesis</keyword>
<keyword id="KW-0808">Transferase</keyword>
<proteinExistence type="inferred from homology"/>
<reference key="1">
    <citation type="journal article" date="2005" name="Science">
        <title>Life at depth: Photobacterium profundum genome sequence and expression analysis.</title>
        <authorList>
            <person name="Vezzi A."/>
            <person name="Campanaro S."/>
            <person name="D'Angelo M."/>
            <person name="Simonato F."/>
            <person name="Vitulo N."/>
            <person name="Lauro F.M."/>
            <person name="Cestaro A."/>
            <person name="Malacrida G."/>
            <person name="Simionati B."/>
            <person name="Cannata N."/>
            <person name="Romualdi C."/>
            <person name="Bartlett D.H."/>
            <person name="Valle G."/>
        </authorList>
    </citation>
    <scope>NUCLEOTIDE SEQUENCE [LARGE SCALE GENOMIC DNA]</scope>
    <source>
        <strain>ATCC BAA-1253 / SS9</strain>
    </source>
</reference>
<comment type="function">
    <text evidence="1">Catalyzes the ATP-dependent phosphorylation of L-homoserine to L-homoserine phosphate.</text>
</comment>
<comment type="catalytic activity">
    <reaction evidence="1">
        <text>L-homoserine + ATP = O-phospho-L-homoserine + ADP + H(+)</text>
        <dbReference type="Rhea" id="RHEA:13985"/>
        <dbReference type="ChEBI" id="CHEBI:15378"/>
        <dbReference type="ChEBI" id="CHEBI:30616"/>
        <dbReference type="ChEBI" id="CHEBI:57476"/>
        <dbReference type="ChEBI" id="CHEBI:57590"/>
        <dbReference type="ChEBI" id="CHEBI:456216"/>
        <dbReference type="EC" id="2.7.1.39"/>
    </reaction>
</comment>
<comment type="pathway">
    <text evidence="1">Amino-acid biosynthesis; L-threonine biosynthesis; L-threonine from L-aspartate: step 4/5.</text>
</comment>
<comment type="subcellular location">
    <subcellularLocation>
        <location evidence="1">Cytoplasm</location>
    </subcellularLocation>
</comment>
<comment type="similarity">
    <text evidence="1">Belongs to the GHMP kinase family. Homoserine kinase subfamily.</text>
</comment>
<gene>
    <name evidence="1" type="primary">thrB</name>
    <name type="ordered locus">PBPRA0553</name>
</gene>
<sequence length="318" mass="34538">MSVVVYAPASIGNVSVGFDVLGAAVSPIDGSLLGDRVEVAAGEQPFTLKCVGDFVAKLPVEQEENIVYHCWLVFARELDKKNIELKPVSMTLEKNMPIGSGLGSSACSVVAALDALNRFHNLPLNEVELLALMGEMEAKISGSLHYDNVAPCYLGGLQFMVQELGIISQPVPCFDDWYWVMAYPGIKVPTAEARAILPSQYRRQDVIAHGRYLGGFIHACHSQQPELAAKMVKDVVAEPYRERLLPGFSNARQYALEAGALASGISGSGPTMFSVCNDLEVAKRIARWLEDNYVQNDEGFVHVCRLDSTGSKVTGSEL</sequence>
<protein>
    <recommendedName>
        <fullName evidence="1">Homoserine kinase</fullName>
        <shortName evidence="1">HK</shortName>
        <shortName evidence="1">HSK</shortName>
        <ecNumber evidence="1">2.7.1.39</ecNumber>
    </recommendedName>
</protein>
<feature type="chain" id="PRO_0000156595" description="Homoserine kinase">
    <location>
        <begin position="1"/>
        <end position="318"/>
    </location>
</feature>
<feature type="binding site" evidence="1">
    <location>
        <begin position="97"/>
        <end position="107"/>
    </location>
    <ligand>
        <name>ATP</name>
        <dbReference type="ChEBI" id="CHEBI:30616"/>
    </ligand>
</feature>
<name>KHSE_PHOPR</name>
<accession>Q6LUP9</accession>